<keyword id="KW-0009">Actin-binding</keyword>
<keyword id="KW-0020">Allergen</keyword>
<keyword id="KW-0963">Cytoplasm</keyword>
<keyword id="KW-0206">Cytoskeleton</keyword>
<keyword id="KW-1015">Disulfide bond</keyword>
<keyword id="KW-0597">Phosphoprotein</keyword>
<evidence type="ECO:0000250" key="1"/>
<evidence type="ECO:0000305" key="2"/>
<evidence type="ECO:0000305" key="3">
    <source>
    </source>
</evidence>
<accession>A4GE54</accession>
<feature type="initiator methionine" description="Removed" evidence="1">
    <location>
        <position position="1"/>
    </location>
</feature>
<feature type="chain" id="PRO_0000425042" description="Profilin-3">
    <location>
        <begin position="2"/>
        <end position="134"/>
    </location>
</feature>
<feature type="short sequence motif" description="Involved in PIP2 interaction">
    <location>
        <begin position="84"/>
        <end position="100"/>
    </location>
</feature>
<feature type="modified residue" description="Phosphothreonine" evidence="1">
    <location>
        <position position="114"/>
    </location>
</feature>
<feature type="disulfide bond" evidence="3">
    <location>
        <begin position="13"/>
        <end position="118"/>
    </location>
</feature>
<dbReference type="EMBL" id="DQ317579">
    <property type="protein sequence ID" value="ABC47422.1"/>
    <property type="molecule type" value="mRNA"/>
</dbReference>
<dbReference type="SMR" id="A4GE54"/>
<dbReference type="Allergome" id="490">
    <property type="allergen name" value="Ole e 2"/>
</dbReference>
<dbReference type="GO" id="GO:0005938">
    <property type="term" value="C:cell cortex"/>
    <property type="evidence" value="ECO:0007669"/>
    <property type="project" value="TreeGrafter"/>
</dbReference>
<dbReference type="GO" id="GO:0005856">
    <property type="term" value="C:cytoskeleton"/>
    <property type="evidence" value="ECO:0007669"/>
    <property type="project" value="UniProtKB-SubCell"/>
</dbReference>
<dbReference type="GO" id="GO:0003785">
    <property type="term" value="F:actin monomer binding"/>
    <property type="evidence" value="ECO:0007669"/>
    <property type="project" value="TreeGrafter"/>
</dbReference>
<dbReference type="CDD" id="cd00148">
    <property type="entry name" value="PROF"/>
    <property type="match status" value="1"/>
</dbReference>
<dbReference type="FunFam" id="3.30.450.30:FF:000001">
    <property type="entry name" value="Profilin"/>
    <property type="match status" value="1"/>
</dbReference>
<dbReference type="Gene3D" id="3.30.450.30">
    <property type="entry name" value="Dynein light chain 2a, cytoplasmic"/>
    <property type="match status" value="1"/>
</dbReference>
<dbReference type="InterPro" id="IPR048278">
    <property type="entry name" value="PFN"/>
</dbReference>
<dbReference type="InterPro" id="IPR005455">
    <property type="entry name" value="PFN_euk"/>
</dbReference>
<dbReference type="InterPro" id="IPR036140">
    <property type="entry name" value="PFN_sf"/>
</dbReference>
<dbReference type="InterPro" id="IPR027310">
    <property type="entry name" value="Profilin_CS"/>
</dbReference>
<dbReference type="PANTHER" id="PTHR11604">
    <property type="entry name" value="PROFILIN"/>
    <property type="match status" value="1"/>
</dbReference>
<dbReference type="PANTHER" id="PTHR11604:SF25">
    <property type="entry name" value="PROFILIN-5"/>
    <property type="match status" value="1"/>
</dbReference>
<dbReference type="Pfam" id="PF00235">
    <property type="entry name" value="Profilin"/>
    <property type="match status" value="1"/>
</dbReference>
<dbReference type="PRINTS" id="PR00392">
    <property type="entry name" value="PROFILIN"/>
</dbReference>
<dbReference type="PRINTS" id="PR01640">
    <property type="entry name" value="PROFILINPLNT"/>
</dbReference>
<dbReference type="SMART" id="SM00392">
    <property type="entry name" value="PROF"/>
    <property type="match status" value="1"/>
</dbReference>
<dbReference type="SUPFAM" id="SSF55770">
    <property type="entry name" value="Profilin (actin-binding protein)"/>
    <property type="match status" value="1"/>
</dbReference>
<dbReference type="PROSITE" id="PS00414">
    <property type="entry name" value="PROFILIN"/>
    <property type="match status" value="1"/>
</dbReference>
<reference key="1">
    <citation type="journal article" date="2012" name="PLoS ONE">
        <title>Characterization of profilin polymorphism in pollen with a focus on multifunctionality.</title>
        <authorList>
            <person name="Jimenez-Lopez J.C."/>
            <person name="Morales S."/>
            <person name="Castro A.J."/>
            <person name="Volkmann D."/>
            <person name="Rodriguez-Garcia M.I."/>
            <person name="Alche Jde D."/>
        </authorList>
    </citation>
    <scope>NUCLEOTIDE SEQUENCE [MRNA]</scope>
    <scope>POLYMORPHISM</scope>
    <source>
        <strain>cv. Sourani</strain>
        <tissue>Pollen</tissue>
    </source>
</reference>
<reference key="2">
    <citation type="journal article" date="2013" name="PLoS ONE">
        <title>Analysis of the effects of polymorphism on pollen profilin structural functionality and the generation of conformational, T- and B-cell epitopes.</title>
        <authorList>
            <person name="Jimenez-Lopez J.C."/>
            <person name="Rodriguez-Garcia M.I."/>
            <person name="Alche J.D."/>
        </authorList>
    </citation>
    <scope>3D-STRUCTURE MODELING</scope>
    <scope>DISULFIDE BOND</scope>
</reference>
<protein>
    <recommendedName>
        <fullName>Profilin-3</fullName>
    </recommendedName>
    <alternativeName>
        <fullName>Pollen allergen Ole e 2</fullName>
    </alternativeName>
    <allergenName>Ole e 2</allergenName>
</protein>
<organism>
    <name type="scientific">Olea europaea</name>
    <name type="common">Common olive</name>
    <dbReference type="NCBI Taxonomy" id="4146"/>
    <lineage>
        <taxon>Eukaryota</taxon>
        <taxon>Viridiplantae</taxon>
        <taxon>Streptophyta</taxon>
        <taxon>Embryophyta</taxon>
        <taxon>Tracheophyta</taxon>
        <taxon>Spermatophyta</taxon>
        <taxon>Magnoliopsida</taxon>
        <taxon>eudicotyledons</taxon>
        <taxon>Gunneridae</taxon>
        <taxon>Pentapetalae</taxon>
        <taxon>asterids</taxon>
        <taxon>lamiids</taxon>
        <taxon>Lamiales</taxon>
        <taxon>Oleaceae</taxon>
        <taxon>Oleeae</taxon>
        <taxon>Olea</taxon>
    </lineage>
</organism>
<proteinExistence type="evidence at protein level"/>
<name>PROBY_OLEEU</name>
<comment type="function">
    <text evidence="1">Binds to actin and affects the structure of the cytoskeleton. At high concentrations, profilin prevents the polymerization of actin, whereas it enhances it at low concentrations (By similarity).</text>
</comment>
<comment type="subunit">
    <text evidence="1">Occurs in many kinds of cells as a complex with monomeric actin in a 1:1 ratio.</text>
</comment>
<comment type="subcellular location">
    <subcellularLocation>
        <location evidence="1">Cytoplasm</location>
        <location evidence="1">Cytoskeleton</location>
    </subcellularLocation>
</comment>
<comment type="PTM">
    <text evidence="1">Phosphorylated by MAP kinases.</text>
</comment>
<comment type="polymorphism">
    <text>Several isoforms of the allergen exist due to polymorphism.</text>
</comment>
<comment type="allergen">
    <text>Causes an allergic reaction in human.</text>
</comment>
<comment type="miscellaneous">
    <text evidence="3">The variability of the residues taking part of IgE-binding epitopes might be responsible of the difference in cross-reactivity among olive pollen cultivars, and between distantly related pollen species, leading to a variable range of allergy reactions among atopic patients.</text>
</comment>
<comment type="similarity">
    <text evidence="2">Belongs to the profilin family.</text>
</comment>
<sequence>MSWQTYVDDHLMCDIEGHEGHRLTAAAIVGHDGSVWAQSATFPQFKPEEMNGIMTDSNEPGHLAPTGLHLGGTKYMVIQGEAGAVIRGKKGSGGITIKKTGQALVCGIYEEPVTPGQCNMVVERLGDYLLEQGL</sequence>